<protein>
    <recommendedName>
        <fullName>Pol polyprotein</fullName>
    </recommendedName>
    <component>
        <recommendedName>
            <fullName>Protease</fullName>
            <ecNumber>3.4.23.-</ecNumber>
        </recommendedName>
        <alternativeName>
            <fullName>Retropepsin</fullName>
        </alternativeName>
    </component>
    <component>
        <recommendedName>
            <fullName>Reverse transcriptase/ribonuclease H</fullName>
            <shortName>RT</shortName>
            <ecNumber>2.7.7.49</ecNumber>
            <ecNumber>3.1.26.13</ecNumber>
        </recommendedName>
        <alternativeName>
            <fullName>Exoribonuclease H</fullName>
            <ecNumber>3.1.13.2</ecNumber>
        </alternativeName>
    </component>
    <component>
        <recommendedName>
            <fullName>Deoxyuridine 5'-triphosphate nucleotidohydrolase</fullName>
            <shortName>dUTPase</shortName>
            <ecNumber>3.6.1.23</ecNumber>
        </recommendedName>
    </component>
    <component>
        <recommendedName>
            <fullName>Integrase</fullName>
            <shortName>IN</shortName>
            <ecNumber evidence="2">2.7.7.-</ecNumber>
            <ecNumber evidence="2">3.1.-.-</ecNumber>
        </recommendedName>
    </component>
</protein>
<accession>P31822</accession>
<feature type="chain" id="PRO_0000038849" description="Protease" evidence="1">
    <location>
        <begin position="1"/>
        <end position="153"/>
    </location>
</feature>
<feature type="chain" id="PRO_0000038850" description="Reverse transcriptase/ribonuclease H" evidence="1">
    <location>
        <begin position="154"/>
        <end position="709"/>
    </location>
</feature>
<feature type="chain" id="PRO_0000038851" description="Deoxyuridine 5'-triphosphate nucleotidohydrolase" evidence="1">
    <location>
        <begin position="710"/>
        <end position="843"/>
    </location>
</feature>
<feature type="chain" id="PRO_0000038852" description="Integrase" evidence="1">
    <location>
        <begin position="844"/>
        <end position="1124"/>
    </location>
</feature>
<feature type="domain" description="Peptidase A2" evidence="3">
    <location>
        <begin position="62"/>
        <end position="143"/>
    </location>
</feature>
<feature type="domain" description="Reverse transcriptase" evidence="4">
    <location>
        <begin position="199"/>
        <end position="388"/>
    </location>
</feature>
<feature type="domain" description="RNase H type-1" evidence="5">
    <location>
        <begin position="591"/>
        <end position="711"/>
    </location>
</feature>
<feature type="domain" description="Integrase catalytic" evidence="7">
    <location>
        <begin position="899"/>
        <end position="1049"/>
    </location>
</feature>
<feature type="zinc finger region" description="Integrase-type" evidence="6">
    <location>
        <begin position="848"/>
        <end position="889"/>
    </location>
</feature>
<feature type="DNA-binding region" description="Integrase-type" evidence="8">
    <location>
        <begin position="1067"/>
        <end position="1115"/>
    </location>
</feature>
<feature type="region of interest" description="Disordered" evidence="10">
    <location>
        <begin position="1"/>
        <end position="23"/>
    </location>
</feature>
<feature type="compositionally biased region" description="Polar residues" evidence="10">
    <location>
        <begin position="12"/>
        <end position="23"/>
    </location>
</feature>
<feature type="active site" description="For protease activity" evidence="9">
    <location>
        <position position="67"/>
    </location>
</feature>
<feature type="binding site" evidence="5">
    <location>
        <position position="600"/>
    </location>
    <ligand>
        <name>Mg(2+)</name>
        <dbReference type="ChEBI" id="CHEBI:18420"/>
        <label>1</label>
    </ligand>
</feature>
<feature type="binding site" evidence="5">
    <location>
        <position position="600"/>
    </location>
    <ligand>
        <name>Mg(2+)</name>
        <dbReference type="ChEBI" id="CHEBI:18420"/>
        <label>2</label>
    </ligand>
</feature>
<feature type="binding site" evidence="5">
    <location>
        <position position="633"/>
    </location>
    <ligand>
        <name>Mg(2+)</name>
        <dbReference type="ChEBI" id="CHEBI:18420"/>
        <label>1</label>
    </ligand>
</feature>
<feature type="binding site" evidence="5">
    <location>
        <position position="653"/>
    </location>
    <ligand>
        <name>Mg(2+)</name>
        <dbReference type="ChEBI" id="CHEBI:18420"/>
        <label>1</label>
    </ligand>
</feature>
<feature type="binding site" evidence="5">
    <location>
        <position position="703"/>
    </location>
    <ligand>
        <name>Mg(2+)</name>
        <dbReference type="ChEBI" id="CHEBI:18420"/>
        <label>2</label>
    </ligand>
</feature>
<feature type="binding site" evidence="6">
    <location>
        <position position="857"/>
    </location>
    <ligand>
        <name>Zn(2+)</name>
        <dbReference type="ChEBI" id="CHEBI:29105"/>
    </ligand>
</feature>
<feature type="binding site" evidence="6">
    <location>
        <position position="861"/>
    </location>
    <ligand>
        <name>Zn(2+)</name>
        <dbReference type="ChEBI" id="CHEBI:29105"/>
    </ligand>
</feature>
<feature type="binding site" evidence="6">
    <location>
        <position position="885"/>
    </location>
    <ligand>
        <name>Zn(2+)</name>
        <dbReference type="ChEBI" id="CHEBI:29105"/>
    </ligand>
</feature>
<feature type="binding site" evidence="6">
    <location>
        <position position="888"/>
    </location>
    <ligand>
        <name>Zn(2+)</name>
        <dbReference type="ChEBI" id="CHEBI:29105"/>
    </ligand>
</feature>
<reference key="1">
    <citation type="journal article" date="1991" name="J. Virol.">
        <title>Identification of feline immunodeficiency virus rev gene activity.</title>
        <authorList>
            <person name="Kiyomasu T."/>
            <person name="Miyazawa T."/>
            <person name="Furuya T."/>
            <person name="Shibata R."/>
            <person name="Sakai H."/>
            <person name="Sakuragi J.I."/>
            <person name="Fukasawa M."/>
            <person name="Maki N."/>
            <person name="Hasegawa A."/>
            <person name="Mikami T."/>
            <person name="Adachi A."/>
        </authorList>
    </citation>
    <scope>NUCLEOTIDE SEQUENCE [GENOMIC RNA]</scope>
</reference>
<reference key="2">
    <citation type="journal article" date="1992" name="Arch. Virol.">
        <title>Molecular characterization and heterogeneity of feline immunodeficiency virus isolates.</title>
        <authorList>
            <person name="Maki N."/>
            <person name="Miyazawa T."/>
            <person name="Fukasawa M."/>
            <person name="Hasegawa A."/>
            <person name="Hayami M."/>
            <person name="Miki K."/>
            <person name="Mikami T."/>
        </authorList>
    </citation>
    <scope>NUCLEOTIDE SEQUENCE [GENOMIC RNA]</scope>
</reference>
<keyword id="KW-0064">Aspartyl protease</keyword>
<keyword id="KW-0229">DNA integration</keyword>
<keyword id="KW-0233">DNA recombination</keyword>
<keyword id="KW-0238">DNA-binding</keyword>
<keyword id="KW-0255">Endonuclease</keyword>
<keyword id="KW-0378">Hydrolase</keyword>
<keyword id="KW-0479">Metal-binding</keyword>
<keyword id="KW-0511">Multifunctional enzyme</keyword>
<keyword id="KW-0540">Nuclease</keyword>
<keyword id="KW-0546">Nucleotide metabolism</keyword>
<keyword id="KW-0548">Nucleotidyltransferase</keyword>
<keyword id="KW-0645">Protease</keyword>
<keyword id="KW-0695">RNA-directed DNA polymerase</keyword>
<keyword id="KW-0808">Transferase</keyword>
<keyword id="KW-1179">Viral genome integration</keyword>
<keyword id="KW-1160">Virus entry into host cell</keyword>
<keyword id="KW-0862">Zinc</keyword>
<keyword id="KW-0863">Zinc-finger</keyword>
<comment type="function">
    <text>During replicative cycle of retroviruses, the reverse-transcribed viral DNA is integrated into the host chromosome by the viral integrase enzyme. RNase H activity is associated with the reverse transcriptase.</text>
</comment>
<comment type="catalytic activity">
    <reaction>
        <text>Endohydrolysis of RNA in RNA/DNA hybrids. Three different cleavage modes: 1. sequence-specific internal cleavage of RNA. Human immunodeficiency virus type 1 and Moloney murine leukemia virus enzymes prefer to cleave the RNA strand one nucleotide away from the RNA-DNA junction. 2. RNA 5'-end directed cleavage 13-19 nucleotides from the RNA end. 3. DNA 3'-end directed cleavage 15-20 nucleotides away from the primer terminus.</text>
        <dbReference type="EC" id="3.1.26.13"/>
    </reaction>
</comment>
<comment type="catalytic activity">
    <reaction>
        <text>3'-end directed exonucleolytic cleavage of viral RNA-DNA hybrid.</text>
        <dbReference type="EC" id="3.1.13.2"/>
    </reaction>
</comment>
<comment type="catalytic activity">
    <reaction>
        <text>dUTP + H2O = dUMP + diphosphate + H(+)</text>
        <dbReference type="Rhea" id="RHEA:10248"/>
        <dbReference type="ChEBI" id="CHEBI:15377"/>
        <dbReference type="ChEBI" id="CHEBI:15378"/>
        <dbReference type="ChEBI" id="CHEBI:33019"/>
        <dbReference type="ChEBI" id="CHEBI:61555"/>
        <dbReference type="ChEBI" id="CHEBI:246422"/>
        <dbReference type="EC" id="3.6.1.23"/>
    </reaction>
</comment>
<comment type="catalytic activity">
    <reaction evidence="4">
        <text>DNA(n) + a 2'-deoxyribonucleoside 5'-triphosphate = DNA(n+1) + diphosphate</text>
        <dbReference type="Rhea" id="RHEA:22508"/>
        <dbReference type="Rhea" id="RHEA-COMP:17339"/>
        <dbReference type="Rhea" id="RHEA-COMP:17340"/>
        <dbReference type="ChEBI" id="CHEBI:33019"/>
        <dbReference type="ChEBI" id="CHEBI:61560"/>
        <dbReference type="ChEBI" id="CHEBI:173112"/>
        <dbReference type="EC" id="2.7.7.49"/>
    </reaction>
</comment>
<comment type="PTM">
    <text>Cleavage sites that yield the mature proteins remain to be determined.</text>
</comment>
<comment type="similarity">
    <text evidence="11">Belongs to the retroviral Pol polyprotein family.</text>
</comment>
<dbReference type="EC" id="3.4.23.-"/>
<dbReference type="EC" id="2.7.7.49"/>
<dbReference type="EC" id="3.1.26.13"/>
<dbReference type="EC" id="3.1.13.2"/>
<dbReference type="EC" id="3.6.1.23"/>
<dbReference type="EC" id="2.7.7.-" evidence="2"/>
<dbReference type="EC" id="3.1.-.-" evidence="2"/>
<dbReference type="EMBL" id="M59418">
    <property type="protein sequence ID" value="AAA43071.1"/>
    <property type="molecule type" value="Genomic_RNA"/>
</dbReference>
<dbReference type="PIR" id="B45557">
    <property type="entry name" value="B45557"/>
</dbReference>
<dbReference type="SMR" id="P31822"/>
<dbReference type="MEROPS" id="A02.007"/>
<dbReference type="GO" id="GO:0004190">
    <property type="term" value="F:aspartic-type endopeptidase activity"/>
    <property type="evidence" value="ECO:0007669"/>
    <property type="project" value="UniProtKB-KW"/>
</dbReference>
<dbReference type="GO" id="GO:0003677">
    <property type="term" value="F:DNA binding"/>
    <property type="evidence" value="ECO:0007669"/>
    <property type="project" value="UniProtKB-KW"/>
</dbReference>
<dbReference type="GO" id="GO:0004170">
    <property type="term" value="F:dUTP diphosphatase activity"/>
    <property type="evidence" value="ECO:0007669"/>
    <property type="project" value="UniProtKB-EC"/>
</dbReference>
<dbReference type="GO" id="GO:0004533">
    <property type="term" value="F:exoribonuclease H activity"/>
    <property type="evidence" value="ECO:0007669"/>
    <property type="project" value="UniProtKB-EC"/>
</dbReference>
<dbReference type="GO" id="GO:0035613">
    <property type="term" value="F:RNA stem-loop binding"/>
    <property type="evidence" value="ECO:0007669"/>
    <property type="project" value="TreeGrafter"/>
</dbReference>
<dbReference type="GO" id="GO:0003964">
    <property type="term" value="F:RNA-directed DNA polymerase activity"/>
    <property type="evidence" value="ECO:0007669"/>
    <property type="project" value="UniProtKB-KW"/>
</dbReference>
<dbReference type="GO" id="GO:0004523">
    <property type="term" value="F:RNA-DNA hybrid ribonuclease activity"/>
    <property type="evidence" value="ECO:0007669"/>
    <property type="project" value="InterPro"/>
</dbReference>
<dbReference type="GO" id="GO:0008270">
    <property type="term" value="F:zinc ion binding"/>
    <property type="evidence" value="ECO:0007669"/>
    <property type="project" value="UniProtKB-KW"/>
</dbReference>
<dbReference type="GO" id="GO:0015074">
    <property type="term" value="P:DNA integration"/>
    <property type="evidence" value="ECO:0007669"/>
    <property type="project" value="UniProtKB-KW"/>
</dbReference>
<dbReference type="GO" id="GO:0006310">
    <property type="term" value="P:DNA recombination"/>
    <property type="evidence" value="ECO:0007669"/>
    <property type="project" value="UniProtKB-KW"/>
</dbReference>
<dbReference type="GO" id="GO:0075713">
    <property type="term" value="P:establishment of integrated proviral latency"/>
    <property type="evidence" value="ECO:0007669"/>
    <property type="project" value="UniProtKB-KW"/>
</dbReference>
<dbReference type="GO" id="GO:0009117">
    <property type="term" value="P:nucleotide metabolic process"/>
    <property type="evidence" value="ECO:0007669"/>
    <property type="project" value="UniProtKB-KW"/>
</dbReference>
<dbReference type="GO" id="GO:0006508">
    <property type="term" value="P:proteolysis"/>
    <property type="evidence" value="ECO:0007669"/>
    <property type="project" value="UniProtKB-KW"/>
</dbReference>
<dbReference type="GO" id="GO:0046718">
    <property type="term" value="P:symbiont entry into host cell"/>
    <property type="evidence" value="ECO:0007669"/>
    <property type="project" value="UniProtKB-KW"/>
</dbReference>
<dbReference type="GO" id="GO:0044826">
    <property type="term" value="P:viral genome integration into host DNA"/>
    <property type="evidence" value="ECO:0007669"/>
    <property type="project" value="UniProtKB-KW"/>
</dbReference>
<dbReference type="CDD" id="cd05482">
    <property type="entry name" value="HIV_retropepsin_like"/>
    <property type="match status" value="1"/>
</dbReference>
<dbReference type="CDD" id="cd07557">
    <property type="entry name" value="trimeric_dUTPase"/>
    <property type="match status" value="1"/>
</dbReference>
<dbReference type="Gene3D" id="1.10.10.200">
    <property type="match status" value="1"/>
</dbReference>
<dbReference type="Gene3D" id="2.70.40.10">
    <property type="match status" value="1"/>
</dbReference>
<dbReference type="Gene3D" id="3.30.70.270">
    <property type="match status" value="3"/>
</dbReference>
<dbReference type="Gene3D" id="2.40.70.10">
    <property type="entry name" value="Acid Proteases"/>
    <property type="match status" value="1"/>
</dbReference>
<dbReference type="Gene3D" id="3.10.10.10">
    <property type="entry name" value="HIV Type 1 Reverse Transcriptase, subunit A, domain 1"/>
    <property type="match status" value="1"/>
</dbReference>
<dbReference type="Gene3D" id="2.30.30.10">
    <property type="entry name" value="Integrase, C-terminal domain superfamily, retroviral"/>
    <property type="match status" value="1"/>
</dbReference>
<dbReference type="Gene3D" id="3.30.420.10">
    <property type="entry name" value="Ribonuclease H-like superfamily/Ribonuclease H"/>
    <property type="match status" value="2"/>
</dbReference>
<dbReference type="InterPro" id="IPR001969">
    <property type="entry name" value="Aspartic_peptidase_AS"/>
</dbReference>
<dbReference type="InterPro" id="IPR043502">
    <property type="entry name" value="DNA/RNA_pol_sf"/>
</dbReference>
<dbReference type="InterPro" id="IPR029054">
    <property type="entry name" value="dUTPase-like"/>
</dbReference>
<dbReference type="InterPro" id="IPR036157">
    <property type="entry name" value="dUTPase-like_sf"/>
</dbReference>
<dbReference type="InterPro" id="IPR033704">
    <property type="entry name" value="dUTPase_trimeric"/>
</dbReference>
<dbReference type="InterPro" id="IPR017856">
    <property type="entry name" value="Integrase-like_N"/>
</dbReference>
<dbReference type="InterPro" id="IPR036862">
    <property type="entry name" value="Integrase_C_dom_sf_retrovir"/>
</dbReference>
<dbReference type="InterPro" id="IPR001037">
    <property type="entry name" value="Integrase_C_retrovir"/>
</dbReference>
<dbReference type="InterPro" id="IPR001584">
    <property type="entry name" value="Integrase_cat-core"/>
</dbReference>
<dbReference type="InterPro" id="IPR003308">
    <property type="entry name" value="Integrase_Zn-bd_dom_N"/>
</dbReference>
<dbReference type="InterPro" id="IPR001995">
    <property type="entry name" value="Peptidase_A2_cat"/>
</dbReference>
<dbReference type="InterPro" id="IPR021109">
    <property type="entry name" value="Peptidase_aspartic_dom_sf"/>
</dbReference>
<dbReference type="InterPro" id="IPR034170">
    <property type="entry name" value="Retropepsin-like_cat_dom"/>
</dbReference>
<dbReference type="InterPro" id="IPR018061">
    <property type="entry name" value="Retropepsins"/>
</dbReference>
<dbReference type="InterPro" id="IPR043128">
    <property type="entry name" value="Rev_trsase/Diguanyl_cyclase"/>
</dbReference>
<dbReference type="InterPro" id="IPR012337">
    <property type="entry name" value="RNaseH-like_sf"/>
</dbReference>
<dbReference type="InterPro" id="IPR002156">
    <property type="entry name" value="RNaseH_domain"/>
</dbReference>
<dbReference type="InterPro" id="IPR036397">
    <property type="entry name" value="RNaseH_sf"/>
</dbReference>
<dbReference type="InterPro" id="IPR000477">
    <property type="entry name" value="RT_dom"/>
</dbReference>
<dbReference type="InterPro" id="IPR010659">
    <property type="entry name" value="RVT_connect"/>
</dbReference>
<dbReference type="InterPro" id="IPR010661">
    <property type="entry name" value="RVT_thumb"/>
</dbReference>
<dbReference type="PANTHER" id="PTHR41694">
    <property type="entry name" value="ENDOGENOUS RETROVIRUS GROUP K MEMBER POL PROTEIN"/>
    <property type="match status" value="1"/>
</dbReference>
<dbReference type="PANTHER" id="PTHR41694:SF3">
    <property type="entry name" value="RNA-DIRECTED DNA POLYMERASE-RELATED"/>
    <property type="match status" value="1"/>
</dbReference>
<dbReference type="Pfam" id="PF00692">
    <property type="entry name" value="dUTPase"/>
    <property type="match status" value="1"/>
</dbReference>
<dbReference type="Pfam" id="PF00552">
    <property type="entry name" value="IN_DBD_C"/>
    <property type="match status" value="1"/>
</dbReference>
<dbReference type="Pfam" id="PF02022">
    <property type="entry name" value="Integrase_Zn"/>
    <property type="match status" value="1"/>
</dbReference>
<dbReference type="Pfam" id="PF00075">
    <property type="entry name" value="RNase_H"/>
    <property type="match status" value="1"/>
</dbReference>
<dbReference type="Pfam" id="PF00665">
    <property type="entry name" value="rve"/>
    <property type="match status" value="1"/>
</dbReference>
<dbReference type="Pfam" id="PF00077">
    <property type="entry name" value="RVP"/>
    <property type="match status" value="1"/>
</dbReference>
<dbReference type="Pfam" id="PF00078">
    <property type="entry name" value="RVT_1"/>
    <property type="match status" value="1"/>
</dbReference>
<dbReference type="Pfam" id="PF06815">
    <property type="entry name" value="RVT_connect"/>
    <property type="match status" value="1"/>
</dbReference>
<dbReference type="Pfam" id="PF06817">
    <property type="entry name" value="RVT_thumb"/>
    <property type="match status" value="1"/>
</dbReference>
<dbReference type="SUPFAM" id="SSF50630">
    <property type="entry name" value="Acid proteases"/>
    <property type="match status" value="1"/>
</dbReference>
<dbReference type="SUPFAM" id="SSF50122">
    <property type="entry name" value="DNA-binding domain of retroviral integrase"/>
    <property type="match status" value="1"/>
</dbReference>
<dbReference type="SUPFAM" id="SSF56672">
    <property type="entry name" value="DNA/RNA polymerases"/>
    <property type="match status" value="1"/>
</dbReference>
<dbReference type="SUPFAM" id="SSF51283">
    <property type="entry name" value="dUTPase-like"/>
    <property type="match status" value="1"/>
</dbReference>
<dbReference type="SUPFAM" id="SSF46919">
    <property type="entry name" value="N-terminal Zn binding domain of HIV integrase"/>
    <property type="match status" value="1"/>
</dbReference>
<dbReference type="SUPFAM" id="SSF53098">
    <property type="entry name" value="Ribonuclease H-like"/>
    <property type="match status" value="2"/>
</dbReference>
<dbReference type="PROSITE" id="PS50175">
    <property type="entry name" value="ASP_PROT_RETROV"/>
    <property type="match status" value="1"/>
</dbReference>
<dbReference type="PROSITE" id="PS00141">
    <property type="entry name" value="ASP_PROTEASE"/>
    <property type="match status" value="1"/>
</dbReference>
<dbReference type="PROSITE" id="PS50994">
    <property type="entry name" value="INTEGRASE"/>
    <property type="match status" value="1"/>
</dbReference>
<dbReference type="PROSITE" id="PS51027">
    <property type="entry name" value="INTEGRASE_DBD"/>
    <property type="match status" value="1"/>
</dbReference>
<dbReference type="PROSITE" id="PS50879">
    <property type="entry name" value="RNASE_H_1"/>
    <property type="match status" value="1"/>
</dbReference>
<dbReference type="PROSITE" id="PS50878">
    <property type="entry name" value="RT_POL"/>
    <property type="match status" value="1"/>
</dbReference>
<dbReference type="PROSITE" id="PS50876">
    <property type="entry name" value="ZF_INTEGRASE"/>
    <property type="match status" value="1"/>
</dbReference>
<organism>
    <name type="scientific">Feline immunodeficiency virus (isolate TM2)</name>
    <name type="common">FIV</name>
    <dbReference type="NCBI Taxonomy" id="31676"/>
    <lineage>
        <taxon>Viruses</taxon>
        <taxon>Riboviria</taxon>
        <taxon>Pararnavirae</taxon>
        <taxon>Artverviricota</taxon>
        <taxon>Revtraviricetes</taxon>
        <taxon>Ortervirales</taxon>
        <taxon>Retroviridae</taxon>
        <taxon>Orthoretrovirinae</taxon>
        <taxon>Lentivirus</taxon>
        <taxon>Feline immunodeficiency virus</taxon>
    </lineage>
</organism>
<proteinExistence type="inferred from homology"/>
<gene>
    <name type="primary">pol</name>
</gene>
<evidence type="ECO:0000250" key="1"/>
<evidence type="ECO:0000250" key="2">
    <source>
        <dbReference type="UniProtKB" id="P04585"/>
    </source>
</evidence>
<evidence type="ECO:0000255" key="3">
    <source>
        <dbReference type="PROSITE-ProRule" id="PRU00275"/>
    </source>
</evidence>
<evidence type="ECO:0000255" key="4">
    <source>
        <dbReference type="PROSITE-ProRule" id="PRU00405"/>
    </source>
</evidence>
<evidence type="ECO:0000255" key="5">
    <source>
        <dbReference type="PROSITE-ProRule" id="PRU00408"/>
    </source>
</evidence>
<evidence type="ECO:0000255" key="6">
    <source>
        <dbReference type="PROSITE-ProRule" id="PRU00450"/>
    </source>
</evidence>
<evidence type="ECO:0000255" key="7">
    <source>
        <dbReference type="PROSITE-ProRule" id="PRU00457"/>
    </source>
</evidence>
<evidence type="ECO:0000255" key="8">
    <source>
        <dbReference type="PROSITE-ProRule" id="PRU00506"/>
    </source>
</evidence>
<evidence type="ECO:0000255" key="9">
    <source>
        <dbReference type="PROSITE-ProRule" id="PRU10094"/>
    </source>
</evidence>
<evidence type="ECO:0000256" key="10">
    <source>
        <dbReference type="SAM" id="MobiDB-lite"/>
    </source>
</evidence>
<evidence type="ECO:0000305" key="11"/>
<sequence>ENLGKREGGASCSPSKPSAANSTICTSNGGETIRFINYNTIGTTTTLERRPEIQIFVNGHPIKFLLDTGADITILNRKDFQIGNSIENGKQNMIGVGGGKRGTNYINVHLEIRDENYRMQCIFGNVCVLEDNSLIQPLLGRDNMIKFNIRLVMAQISEKIPIVKVRMKDPTQGPQVKQWPLSNEKIEALTDIVERLESEGKVKRADPNNPWNTPVFAIKKKSGKWRMLIDFRVLNKLTDKGAEVQLGLPHPAGLQMKKQVTVLDIGDAYFTIPLDPDYAPYTAFTLPRKNNAGPGRRYVWCSLPQGWVLSPLIYQSTLNNILQPFIKQNSELDIYQYMDDIYIGSNLNKKEHKQKVEELRKLLLWWGFETPEDKLQEEPPYKWMGYELHPLTWSIQQKQLEIPERPTLNELQKLAGKINWASQTIPDLSIKELTNMMRGDQKLDSIREWTVEAKREVQKAKEAIETQAQLNYYDPNRGLYAKLSLVGPHQICYQVYQKNPEHILWYGKINRQKKKAENTCDIALRACYKIREESIIRIGKEPVYEIPASREAWESNLIRSPYLKAPPPEVEFIHAALSIKRALSMIQDAPIIGAETWYIDGSRKQGKAARAAYWTNTGKWQIMEIEGSNQKAEVQALLLALKAGSEEMNIITDSQYILNILNQQPDLMEGLWQEVLEQMEKKIAIFIDWVPGHKGIPGNEEVDKLCQTMMIIEGEGILEKRSEDAGYDLLAAAQETHFLPGEVRIVPTKTRIMLPKGHWGLIMGKSSIGSKGVDVLGGVIDEGYRGELGVIMINLTKKSITILEKQKIAQLIILPCRHEGLQQGEIQMNSERGEKGFGSAGVFSSWVDRIEEAELNHEKFHSDPQYLRTEFNLPRIVAEEIKRKCPLCRIRGEQVGGQLKIRPGIWQMDCTHFNGKIIIVAVHVESGFLWAQIIPQETADCTVKALLQLICAHNVTELQTDNGPNFKNQKMEGLLNYMGIKHKLGIPGNPQSQALVENANNTLKVWIQKFLPETTSLDNALALALHCLNFKQRGRLGRMAPYELYIQQESLRIQDYFSAIPQKLMMQWLYYKDQKDKKWKGPMRVEYWGQGSVLLKDEEKGIFLVPRRHIRRVPEPCTLPEGDE</sequence>
<organismHost>
    <name type="scientific">Felidae</name>
    <name type="common">cat family</name>
    <dbReference type="NCBI Taxonomy" id="9681"/>
</organismHost>
<name>POL_FIVT2</name>